<dbReference type="EMBL" id="CP000057">
    <property type="protein sequence ID" value="AAX87532.1"/>
    <property type="molecule type" value="Genomic_DNA"/>
</dbReference>
<dbReference type="RefSeq" id="WP_005649396.1">
    <property type="nucleotide sequence ID" value="NC_007146.2"/>
</dbReference>
<dbReference type="SMR" id="Q4QN65"/>
<dbReference type="KEGG" id="hit:NTHI0608"/>
<dbReference type="HOGENOM" id="CLU_084338_2_0_6"/>
<dbReference type="Proteomes" id="UP000002525">
    <property type="component" value="Chromosome"/>
</dbReference>
<dbReference type="GO" id="GO:0005886">
    <property type="term" value="C:plasma membrane"/>
    <property type="evidence" value="ECO:0007669"/>
    <property type="project" value="UniProtKB-SubCell"/>
</dbReference>
<dbReference type="GO" id="GO:0045259">
    <property type="term" value="C:proton-transporting ATP synthase complex"/>
    <property type="evidence" value="ECO:0007669"/>
    <property type="project" value="UniProtKB-KW"/>
</dbReference>
<dbReference type="GO" id="GO:0005524">
    <property type="term" value="F:ATP binding"/>
    <property type="evidence" value="ECO:0007669"/>
    <property type="project" value="UniProtKB-UniRule"/>
</dbReference>
<dbReference type="GO" id="GO:0046933">
    <property type="term" value="F:proton-transporting ATP synthase activity, rotational mechanism"/>
    <property type="evidence" value="ECO:0007669"/>
    <property type="project" value="UniProtKB-UniRule"/>
</dbReference>
<dbReference type="CDD" id="cd12152">
    <property type="entry name" value="F1-ATPase_delta"/>
    <property type="match status" value="1"/>
</dbReference>
<dbReference type="FunFam" id="2.60.15.10:FF:000001">
    <property type="entry name" value="ATP synthase epsilon chain"/>
    <property type="match status" value="1"/>
</dbReference>
<dbReference type="Gene3D" id="1.20.5.440">
    <property type="entry name" value="ATP synthase delta/epsilon subunit, C-terminal domain"/>
    <property type="match status" value="1"/>
</dbReference>
<dbReference type="Gene3D" id="2.60.15.10">
    <property type="entry name" value="F0F1 ATP synthase delta/epsilon subunit, N-terminal"/>
    <property type="match status" value="1"/>
</dbReference>
<dbReference type="HAMAP" id="MF_00530">
    <property type="entry name" value="ATP_synth_epsil_bac"/>
    <property type="match status" value="1"/>
</dbReference>
<dbReference type="InterPro" id="IPR036794">
    <property type="entry name" value="ATP_F1_dsu/esu_C_sf"/>
</dbReference>
<dbReference type="InterPro" id="IPR001469">
    <property type="entry name" value="ATP_synth_F1_dsu/esu"/>
</dbReference>
<dbReference type="InterPro" id="IPR020546">
    <property type="entry name" value="ATP_synth_F1_dsu/esu_N"/>
</dbReference>
<dbReference type="InterPro" id="IPR036771">
    <property type="entry name" value="ATPsynth_dsu/esu_N"/>
</dbReference>
<dbReference type="NCBIfam" id="TIGR01216">
    <property type="entry name" value="ATP_synt_epsi"/>
    <property type="match status" value="1"/>
</dbReference>
<dbReference type="NCBIfam" id="NF001847">
    <property type="entry name" value="PRK00571.1-4"/>
    <property type="match status" value="1"/>
</dbReference>
<dbReference type="PANTHER" id="PTHR13822">
    <property type="entry name" value="ATP SYNTHASE DELTA/EPSILON CHAIN"/>
    <property type="match status" value="1"/>
</dbReference>
<dbReference type="PANTHER" id="PTHR13822:SF10">
    <property type="entry name" value="ATP SYNTHASE EPSILON CHAIN, CHLOROPLASTIC"/>
    <property type="match status" value="1"/>
</dbReference>
<dbReference type="Pfam" id="PF02823">
    <property type="entry name" value="ATP-synt_DE_N"/>
    <property type="match status" value="1"/>
</dbReference>
<dbReference type="SUPFAM" id="SSF46604">
    <property type="entry name" value="Epsilon subunit of F1F0-ATP synthase C-terminal domain"/>
    <property type="match status" value="1"/>
</dbReference>
<dbReference type="SUPFAM" id="SSF51344">
    <property type="entry name" value="Epsilon subunit of F1F0-ATP synthase N-terminal domain"/>
    <property type="match status" value="1"/>
</dbReference>
<gene>
    <name evidence="1" type="primary">atpC</name>
    <name type="ordered locus">NTHI0608</name>
</gene>
<organism>
    <name type="scientific">Haemophilus influenzae (strain 86-028NP)</name>
    <dbReference type="NCBI Taxonomy" id="281310"/>
    <lineage>
        <taxon>Bacteria</taxon>
        <taxon>Pseudomonadati</taxon>
        <taxon>Pseudomonadota</taxon>
        <taxon>Gammaproteobacteria</taxon>
        <taxon>Pasteurellales</taxon>
        <taxon>Pasteurellaceae</taxon>
        <taxon>Haemophilus</taxon>
    </lineage>
</organism>
<name>ATPE_HAEI8</name>
<keyword id="KW-0066">ATP synthesis</keyword>
<keyword id="KW-0997">Cell inner membrane</keyword>
<keyword id="KW-1003">Cell membrane</keyword>
<keyword id="KW-0139">CF(1)</keyword>
<keyword id="KW-0375">Hydrogen ion transport</keyword>
<keyword id="KW-0406">Ion transport</keyword>
<keyword id="KW-0472">Membrane</keyword>
<keyword id="KW-0813">Transport</keyword>
<protein>
    <recommendedName>
        <fullName evidence="1">ATP synthase epsilon chain</fullName>
    </recommendedName>
    <alternativeName>
        <fullName evidence="1">ATP synthase F1 sector epsilon subunit</fullName>
    </alternativeName>
    <alternativeName>
        <fullName evidence="1">F-ATPase epsilon subunit</fullName>
    </alternativeName>
</protein>
<feature type="chain" id="PRO_0000265820" description="ATP synthase epsilon chain">
    <location>
        <begin position="1"/>
        <end position="142"/>
    </location>
</feature>
<accession>Q4QN65</accession>
<reference key="1">
    <citation type="journal article" date="2005" name="J. Bacteriol.">
        <title>Genomic sequence of an otitis media isolate of nontypeable Haemophilus influenzae: comparative study with H. influenzae serotype d, strain KW20.</title>
        <authorList>
            <person name="Harrison A."/>
            <person name="Dyer D.W."/>
            <person name="Gillaspy A."/>
            <person name="Ray W.C."/>
            <person name="Mungur R."/>
            <person name="Carson M.B."/>
            <person name="Zhong H."/>
            <person name="Gipson J."/>
            <person name="Gipson M."/>
            <person name="Johnson L.S."/>
            <person name="Lewis L."/>
            <person name="Bakaletz L.O."/>
            <person name="Munson R.S. Jr."/>
        </authorList>
    </citation>
    <scope>NUCLEOTIDE SEQUENCE [LARGE SCALE GENOMIC DNA]</scope>
    <source>
        <strain>86-028NP</strain>
    </source>
</reference>
<proteinExistence type="inferred from homology"/>
<evidence type="ECO:0000255" key="1">
    <source>
        <dbReference type="HAMAP-Rule" id="MF_00530"/>
    </source>
</evidence>
<sequence length="142" mass="15591">MATFNLTIVSAEQKIFEGEVKQIQVTGVEGELGILPGHTPLLTAIKPGIVKFTLKDGNEEVIYVSGGFLEVQPNIVTVLADIAIRGSELDADRIHEAKRKAEENIVSRGSDADHDLLVAKLSKELAKLRAYELTEKLLKTRR</sequence>
<comment type="function">
    <text evidence="1">Produces ATP from ADP in the presence of a proton gradient across the membrane.</text>
</comment>
<comment type="subunit">
    <text>F-type ATPases have 2 components, CF(1) - the catalytic core - and CF(0) - the membrane proton channel. CF(1) has five subunits: alpha(3), beta(3), gamma(1), delta(1), epsilon(1). CF(0) has three main subunits: a, b and c.</text>
</comment>
<comment type="subcellular location">
    <subcellularLocation>
        <location evidence="1">Cell inner membrane</location>
        <topology evidence="1">Peripheral membrane protein</topology>
    </subcellularLocation>
</comment>
<comment type="similarity">
    <text evidence="1">Belongs to the ATPase epsilon chain family.</text>
</comment>